<comment type="function">
    <text evidence="1">Involved in unsaturated fatty acids biosynthesis. Catalyzes the dehydration of short chain beta-hydroxyacyl-ACPs and long chain saturated and unsaturated beta-hydroxyacyl-ACPs.</text>
</comment>
<comment type="catalytic activity">
    <reaction evidence="1">
        <text>a (3R)-hydroxyacyl-[ACP] = a (2E)-enoyl-[ACP] + H2O</text>
        <dbReference type="Rhea" id="RHEA:13097"/>
        <dbReference type="Rhea" id="RHEA-COMP:9925"/>
        <dbReference type="Rhea" id="RHEA-COMP:9945"/>
        <dbReference type="ChEBI" id="CHEBI:15377"/>
        <dbReference type="ChEBI" id="CHEBI:78784"/>
        <dbReference type="ChEBI" id="CHEBI:78827"/>
        <dbReference type="EC" id="4.2.1.59"/>
    </reaction>
</comment>
<comment type="subcellular location">
    <subcellularLocation>
        <location evidence="1">Cytoplasm</location>
    </subcellularLocation>
</comment>
<comment type="similarity">
    <text evidence="1">Belongs to the thioester dehydratase family. FabZ subfamily.</text>
</comment>
<dbReference type="EC" id="4.2.1.59" evidence="1"/>
<dbReference type="EMBL" id="CR628337">
    <property type="protein sequence ID" value="CAH14778.1"/>
    <property type="molecule type" value="Genomic_DNA"/>
</dbReference>
<dbReference type="RefSeq" id="WP_011214749.1">
    <property type="nucleotide sequence ID" value="NC_006369.1"/>
</dbReference>
<dbReference type="SMR" id="Q5WZ34"/>
<dbReference type="KEGG" id="lpf:lpl0548"/>
<dbReference type="LegioList" id="lpl0548"/>
<dbReference type="HOGENOM" id="CLU_078912_1_2_6"/>
<dbReference type="Proteomes" id="UP000002517">
    <property type="component" value="Chromosome"/>
</dbReference>
<dbReference type="GO" id="GO:0005737">
    <property type="term" value="C:cytoplasm"/>
    <property type="evidence" value="ECO:0007669"/>
    <property type="project" value="UniProtKB-SubCell"/>
</dbReference>
<dbReference type="GO" id="GO:0016020">
    <property type="term" value="C:membrane"/>
    <property type="evidence" value="ECO:0007669"/>
    <property type="project" value="GOC"/>
</dbReference>
<dbReference type="GO" id="GO:0019171">
    <property type="term" value="F:(3R)-hydroxyacyl-[acyl-carrier-protein] dehydratase activity"/>
    <property type="evidence" value="ECO:0007669"/>
    <property type="project" value="UniProtKB-EC"/>
</dbReference>
<dbReference type="GO" id="GO:0006633">
    <property type="term" value="P:fatty acid biosynthetic process"/>
    <property type="evidence" value="ECO:0007669"/>
    <property type="project" value="UniProtKB-UniRule"/>
</dbReference>
<dbReference type="GO" id="GO:0009245">
    <property type="term" value="P:lipid A biosynthetic process"/>
    <property type="evidence" value="ECO:0007669"/>
    <property type="project" value="UniProtKB-UniRule"/>
</dbReference>
<dbReference type="CDD" id="cd01288">
    <property type="entry name" value="FabZ"/>
    <property type="match status" value="1"/>
</dbReference>
<dbReference type="FunFam" id="3.10.129.10:FF:000001">
    <property type="entry name" value="3-hydroxyacyl-[acyl-carrier-protein] dehydratase FabZ"/>
    <property type="match status" value="1"/>
</dbReference>
<dbReference type="Gene3D" id="3.10.129.10">
    <property type="entry name" value="Hotdog Thioesterase"/>
    <property type="match status" value="1"/>
</dbReference>
<dbReference type="HAMAP" id="MF_00406">
    <property type="entry name" value="FabZ"/>
    <property type="match status" value="1"/>
</dbReference>
<dbReference type="InterPro" id="IPR013114">
    <property type="entry name" value="FabA_FabZ"/>
</dbReference>
<dbReference type="InterPro" id="IPR010084">
    <property type="entry name" value="FabZ"/>
</dbReference>
<dbReference type="InterPro" id="IPR029069">
    <property type="entry name" value="HotDog_dom_sf"/>
</dbReference>
<dbReference type="NCBIfam" id="TIGR01750">
    <property type="entry name" value="fabZ"/>
    <property type="match status" value="1"/>
</dbReference>
<dbReference type="NCBIfam" id="NF000582">
    <property type="entry name" value="PRK00006.1"/>
    <property type="match status" value="1"/>
</dbReference>
<dbReference type="PANTHER" id="PTHR30272">
    <property type="entry name" value="3-HYDROXYACYL-[ACYL-CARRIER-PROTEIN] DEHYDRATASE"/>
    <property type="match status" value="1"/>
</dbReference>
<dbReference type="PANTHER" id="PTHR30272:SF1">
    <property type="entry name" value="3-HYDROXYACYL-[ACYL-CARRIER-PROTEIN] DEHYDRATASE"/>
    <property type="match status" value="1"/>
</dbReference>
<dbReference type="Pfam" id="PF07977">
    <property type="entry name" value="FabA"/>
    <property type="match status" value="1"/>
</dbReference>
<dbReference type="SUPFAM" id="SSF54637">
    <property type="entry name" value="Thioesterase/thiol ester dehydrase-isomerase"/>
    <property type="match status" value="1"/>
</dbReference>
<reference key="1">
    <citation type="journal article" date="2004" name="Nat. Genet.">
        <title>Evidence in the Legionella pneumophila genome for exploitation of host cell functions and high genome plasticity.</title>
        <authorList>
            <person name="Cazalet C."/>
            <person name="Rusniok C."/>
            <person name="Brueggemann H."/>
            <person name="Zidane N."/>
            <person name="Magnier A."/>
            <person name="Ma L."/>
            <person name="Tichit M."/>
            <person name="Jarraud S."/>
            <person name="Bouchier C."/>
            <person name="Vandenesch F."/>
            <person name="Kunst F."/>
            <person name="Etienne J."/>
            <person name="Glaser P."/>
            <person name="Buchrieser C."/>
        </authorList>
    </citation>
    <scope>NUCLEOTIDE SEQUENCE [LARGE SCALE GENOMIC DNA]</scope>
    <source>
        <strain>Lens</strain>
    </source>
</reference>
<protein>
    <recommendedName>
        <fullName evidence="1">3-hydroxyacyl-[acyl-carrier-protein] dehydratase FabZ</fullName>
        <ecNumber evidence="1">4.2.1.59</ecNumber>
    </recommendedName>
    <alternativeName>
        <fullName evidence="1">(3R)-hydroxymyristoyl-[acyl-carrier-protein] dehydratase</fullName>
        <shortName evidence="1">(3R)-hydroxymyristoyl-ACP dehydrase</shortName>
    </alternativeName>
    <alternativeName>
        <fullName evidence="1">Beta-hydroxyacyl-ACP dehydratase</fullName>
    </alternativeName>
</protein>
<organism>
    <name type="scientific">Legionella pneumophila (strain Lens)</name>
    <dbReference type="NCBI Taxonomy" id="297245"/>
    <lineage>
        <taxon>Bacteria</taxon>
        <taxon>Pseudomonadati</taxon>
        <taxon>Pseudomonadota</taxon>
        <taxon>Gammaproteobacteria</taxon>
        <taxon>Legionellales</taxon>
        <taxon>Legionellaceae</taxon>
        <taxon>Legionella</taxon>
    </lineage>
</organism>
<accession>Q5WZ34</accession>
<keyword id="KW-0963">Cytoplasm</keyword>
<keyword id="KW-0441">Lipid A biosynthesis</keyword>
<keyword id="KW-0444">Lipid biosynthesis</keyword>
<keyword id="KW-0443">Lipid metabolism</keyword>
<keyword id="KW-0456">Lyase</keyword>
<feature type="chain" id="PRO_0000091696" description="3-hydroxyacyl-[acyl-carrier-protein] dehydratase FabZ">
    <location>
        <begin position="1"/>
        <end position="150"/>
    </location>
</feature>
<feature type="active site" evidence="1">
    <location>
        <position position="51"/>
    </location>
</feature>
<sequence length="150" mass="17142">MNESIDINQIFTLLPHRYPFILVDRVIDYKVMEYLIAIKNVTINENFFTGHFPGNPIMPGVLMLEALAQASGILANLSRQPKEGYEFLHYFAGIDNARFKQVVIPGDQLRLEVRLVGQKRDFWRMHGEAYIGDKLACSADLLSATKEIKK</sequence>
<gene>
    <name evidence="1" type="primary">fabZ</name>
    <name type="ordered locus">lpl0548</name>
</gene>
<evidence type="ECO:0000255" key="1">
    <source>
        <dbReference type="HAMAP-Rule" id="MF_00406"/>
    </source>
</evidence>
<proteinExistence type="inferred from homology"/>
<name>FABZ_LEGPL</name>